<accession>O51353</accession>
<dbReference type="EMBL" id="AE000783">
    <property type="protein sequence ID" value="AAC66773.1"/>
    <property type="molecule type" value="Genomic_DNA"/>
</dbReference>
<dbReference type="PIR" id="G70148">
    <property type="entry name" value="G70148"/>
</dbReference>
<dbReference type="RefSeq" id="NP_212526.1">
    <property type="nucleotide sequence ID" value="NC_001318.1"/>
</dbReference>
<dbReference type="RefSeq" id="WP_002656139.1">
    <property type="nucleotide sequence ID" value="NC_001318.1"/>
</dbReference>
<dbReference type="PDB" id="8FMW">
    <property type="method" value="EM"/>
    <property type="resolution" value="2.86 A"/>
    <property type="chains" value="AC=6-226"/>
</dbReference>
<dbReference type="PDBsum" id="8FMW"/>
<dbReference type="EMDB" id="EMD-29298"/>
<dbReference type="SMR" id="O51353"/>
<dbReference type="STRING" id="224326.BB_0392"/>
<dbReference type="PaxDb" id="224326-BB_0392"/>
<dbReference type="EnsemblBacteria" id="AAC66773">
    <property type="protein sequence ID" value="AAC66773"/>
    <property type="gene ID" value="BB_0392"/>
</dbReference>
<dbReference type="KEGG" id="bbu:BB_0392"/>
<dbReference type="PATRIC" id="fig|224326.49.peg.787"/>
<dbReference type="HOGENOM" id="CLU_062853_0_0_12"/>
<dbReference type="OrthoDB" id="9803740at2"/>
<dbReference type="Proteomes" id="UP000001807">
    <property type="component" value="Chromosome"/>
</dbReference>
<dbReference type="GO" id="GO:0015934">
    <property type="term" value="C:large ribosomal subunit"/>
    <property type="evidence" value="ECO:0007669"/>
    <property type="project" value="InterPro"/>
</dbReference>
<dbReference type="GO" id="GO:0019843">
    <property type="term" value="F:rRNA binding"/>
    <property type="evidence" value="ECO:0007669"/>
    <property type="project" value="UniProtKB-UniRule"/>
</dbReference>
<dbReference type="GO" id="GO:0003735">
    <property type="term" value="F:structural constituent of ribosome"/>
    <property type="evidence" value="ECO:0007669"/>
    <property type="project" value="InterPro"/>
</dbReference>
<dbReference type="GO" id="GO:0000049">
    <property type="term" value="F:tRNA binding"/>
    <property type="evidence" value="ECO:0007669"/>
    <property type="project" value="UniProtKB-KW"/>
</dbReference>
<dbReference type="GO" id="GO:0006417">
    <property type="term" value="P:regulation of translation"/>
    <property type="evidence" value="ECO:0007669"/>
    <property type="project" value="UniProtKB-KW"/>
</dbReference>
<dbReference type="GO" id="GO:0006412">
    <property type="term" value="P:translation"/>
    <property type="evidence" value="ECO:0007669"/>
    <property type="project" value="UniProtKB-UniRule"/>
</dbReference>
<dbReference type="CDD" id="cd00403">
    <property type="entry name" value="Ribosomal_L1"/>
    <property type="match status" value="1"/>
</dbReference>
<dbReference type="FunFam" id="3.40.50.790:FF:000001">
    <property type="entry name" value="50S ribosomal protein L1"/>
    <property type="match status" value="1"/>
</dbReference>
<dbReference type="Gene3D" id="3.30.190.20">
    <property type="match status" value="1"/>
</dbReference>
<dbReference type="Gene3D" id="3.40.50.790">
    <property type="match status" value="1"/>
</dbReference>
<dbReference type="HAMAP" id="MF_01318_B">
    <property type="entry name" value="Ribosomal_uL1_B"/>
    <property type="match status" value="1"/>
</dbReference>
<dbReference type="InterPro" id="IPR005878">
    <property type="entry name" value="Ribosom_uL1_bac-type"/>
</dbReference>
<dbReference type="InterPro" id="IPR002143">
    <property type="entry name" value="Ribosomal_uL1"/>
</dbReference>
<dbReference type="InterPro" id="IPR023674">
    <property type="entry name" value="Ribosomal_uL1-like"/>
</dbReference>
<dbReference type="InterPro" id="IPR028364">
    <property type="entry name" value="Ribosomal_uL1/biogenesis"/>
</dbReference>
<dbReference type="InterPro" id="IPR016095">
    <property type="entry name" value="Ribosomal_uL1_3-a/b-sand"/>
</dbReference>
<dbReference type="InterPro" id="IPR023673">
    <property type="entry name" value="Ribosomal_uL1_CS"/>
</dbReference>
<dbReference type="NCBIfam" id="TIGR01169">
    <property type="entry name" value="rplA_bact"/>
    <property type="match status" value="1"/>
</dbReference>
<dbReference type="PANTHER" id="PTHR36427">
    <property type="entry name" value="54S RIBOSOMAL PROTEIN L1, MITOCHONDRIAL"/>
    <property type="match status" value="1"/>
</dbReference>
<dbReference type="PANTHER" id="PTHR36427:SF3">
    <property type="entry name" value="LARGE RIBOSOMAL SUBUNIT PROTEIN UL1M"/>
    <property type="match status" value="1"/>
</dbReference>
<dbReference type="Pfam" id="PF00687">
    <property type="entry name" value="Ribosomal_L1"/>
    <property type="match status" value="1"/>
</dbReference>
<dbReference type="PIRSF" id="PIRSF002155">
    <property type="entry name" value="Ribosomal_L1"/>
    <property type="match status" value="1"/>
</dbReference>
<dbReference type="SUPFAM" id="SSF56808">
    <property type="entry name" value="Ribosomal protein L1"/>
    <property type="match status" value="1"/>
</dbReference>
<dbReference type="PROSITE" id="PS01199">
    <property type="entry name" value="RIBOSOMAL_L1"/>
    <property type="match status" value="1"/>
</dbReference>
<organism>
    <name type="scientific">Borreliella burgdorferi (strain ATCC 35210 / DSM 4680 / CIP 102532 / B31)</name>
    <name type="common">Borrelia burgdorferi</name>
    <dbReference type="NCBI Taxonomy" id="224326"/>
    <lineage>
        <taxon>Bacteria</taxon>
        <taxon>Pseudomonadati</taxon>
        <taxon>Spirochaetota</taxon>
        <taxon>Spirochaetia</taxon>
        <taxon>Spirochaetales</taxon>
        <taxon>Borreliaceae</taxon>
        <taxon>Borreliella</taxon>
    </lineage>
</organism>
<keyword id="KW-0002">3D-structure</keyword>
<keyword id="KW-1185">Reference proteome</keyword>
<keyword id="KW-0678">Repressor</keyword>
<keyword id="KW-0687">Ribonucleoprotein</keyword>
<keyword id="KW-0689">Ribosomal protein</keyword>
<keyword id="KW-0694">RNA-binding</keyword>
<keyword id="KW-0699">rRNA-binding</keyword>
<keyword id="KW-0810">Translation regulation</keyword>
<keyword id="KW-0820">tRNA-binding</keyword>
<proteinExistence type="evidence at protein level"/>
<gene>
    <name evidence="1" type="primary">rplA</name>
    <name type="ordered locus">BB_0392</name>
</gene>
<evidence type="ECO:0000255" key="1">
    <source>
        <dbReference type="HAMAP-Rule" id="MF_01318"/>
    </source>
</evidence>
<evidence type="ECO:0000305" key="2"/>
<sequence>MSKKGKKYIEAFSKVDKNKFYNIEDAILLLKEIKFAKFDETIDISINLNLKKNHTVRDTIVLPNQFMKPKRILVFAKGDRADEARAFGATYVGDDDLINKIKSGWDEFDVVVATPDMMKDVGRLGPILGKRGLMPNPKTQTVTNNLKDAINSLKKGRTEFRANKNGVISFSFGKSSMDNEKIKENYEEFVKEVVKKRPSDLKGAFIDSIYISSTMGPSIKVNFVWR</sequence>
<protein>
    <recommendedName>
        <fullName evidence="1">Large ribosomal subunit protein uL1</fullName>
    </recommendedName>
    <alternativeName>
        <fullName evidence="2">50S ribosomal protein L1</fullName>
    </alternativeName>
</protein>
<feature type="chain" id="PRO_0000125623" description="Large ribosomal subunit protein uL1">
    <location>
        <begin position="1"/>
        <end position="226"/>
    </location>
</feature>
<comment type="function">
    <text evidence="1">Binds directly to 23S rRNA. The L1 stalk is quite mobile in the ribosome, and is involved in E site tRNA release.</text>
</comment>
<comment type="function">
    <text evidence="1">Protein L1 is also a translational repressor protein, it controls the translation of the L11 operon by binding to its mRNA.</text>
</comment>
<comment type="subunit">
    <text evidence="1">Part of the 50S ribosomal subunit.</text>
</comment>
<comment type="similarity">
    <text evidence="1">Belongs to the universal ribosomal protein uL1 family.</text>
</comment>
<reference key="1">
    <citation type="journal article" date="1997" name="Nature">
        <title>Genomic sequence of a Lyme disease spirochaete, Borrelia burgdorferi.</title>
        <authorList>
            <person name="Fraser C.M."/>
            <person name="Casjens S."/>
            <person name="Huang W.M."/>
            <person name="Sutton G.G."/>
            <person name="Clayton R.A."/>
            <person name="Lathigra R."/>
            <person name="White O."/>
            <person name="Ketchum K.A."/>
            <person name="Dodson R.J."/>
            <person name="Hickey E.K."/>
            <person name="Gwinn M.L."/>
            <person name="Dougherty B.A."/>
            <person name="Tomb J.-F."/>
            <person name="Fleischmann R.D."/>
            <person name="Richardson D.L."/>
            <person name="Peterson J.D."/>
            <person name="Kerlavage A.R."/>
            <person name="Quackenbush J."/>
            <person name="Salzberg S.L."/>
            <person name="Hanson M."/>
            <person name="van Vugt R."/>
            <person name="Palmer N."/>
            <person name="Adams M.D."/>
            <person name="Gocayne J.D."/>
            <person name="Weidman J.F."/>
            <person name="Utterback T.R."/>
            <person name="Watthey L."/>
            <person name="McDonald L.A."/>
            <person name="Artiach P."/>
            <person name="Bowman C."/>
            <person name="Garland S.A."/>
            <person name="Fujii C."/>
            <person name="Cotton M.D."/>
            <person name="Horst K."/>
            <person name="Roberts K.M."/>
            <person name="Hatch B."/>
            <person name="Smith H.O."/>
            <person name="Venter J.C."/>
        </authorList>
    </citation>
    <scope>NUCLEOTIDE SEQUENCE [LARGE SCALE GENOMIC DNA]</scope>
    <source>
        <strain>ATCC 35210 / DSM 4680 / CIP 102532 / B31</strain>
    </source>
</reference>
<name>RL1_BORBU</name>